<gene>
    <name type="ordered locus">TT_C0214</name>
</gene>
<keyword id="KW-0002">3D-structure</keyword>
<accession>Q72L49</accession>
<sequence length="196" mass="20957">MEGIRRAAQRAVEEFLQAFPMGPGSLFVLGGSTSEVLGERVGTRPSLEAAHAVLEGLLPPLLERGVHVAVQACEHLNRALVVERETARAFGLEEVAVFPHPKAGGALATAAFLRFQDPVVVESLKAQAHGGMDIGGVLIGMHLRPVAVPLRLSVRKIGEAVLLAAKTRPKLVGGARAVYTREEMLKKLEEFLPKPP</sequence>
<organism>
    <name type="scientific">Thermus thermophilus (strain ATCC BAA-163 / DSM 7039 / HB27)</name>
    <dbReference type="NCBI Taxonomy" id="262724"/>
    <lineage>
        <taxon>Bacteria</taxon>
        <taxon>Thermotogati</taxon>
        <taxon>Deinococcota</taxon>
        <taxon>Deinococci</taxon>
        <taxon>Thermales</taxon>
        <taxon>Thermaceae</taxon>
        <taxon>Thermus</taxon>
    </lineage>
</organism>
<evidence type="ECO:0000255" key="1">
    <source>
        <dbReference type="HAMAP-Rule" id="MF_00800"/>
    </source>
</evidence>
<evidence type="ECO:0007829" key="2">
    <source>
        <dbReference type="PDB" id="1V8D"/>
    </source>
</evidence>
<name>Y214_THET2</name>
<comment type="similarity">
    <text evidence="1">Belongs to the UPF0340 family.</text>
</comment>
<protein>
    <recommendedName>
        <fullName evidence="1">UPF0340 protein TT_C0214</fullName>
    </recommendedName>
</protein>
<reference key="1">
    <citation type="journal article" date="2004" name="Nat. Biotechnol.">
        <title>The genome sequence of the extreme thermophile Thermus thermophilus.</title>
        <authorList>
            <person name="Henne A."/>
            <person name="Brueggemann H."/>
            <person name="Raasch C."/>
            <person name="Wiezer A."/>
            <person name="Hartsch T."/>
            <person name="Liesegang H."/>
            <person name="Johann A."/>
            <person name="Lienard T."/>
            <person name="Gohl O."/>
            <person name="Martinez-Arias R."/>
            <person name="Jacobi C."/>
            <person name="Starkuviene V."/>
            <person name="Schlenczeck S."/>
            <person name="Dencker S."/>
            <person name="Huber R."/>
            <person name="Klenk H.-P."/>
            <person name="Kramer W."/>
            <person name="Merkl R."/>
            <person name="Gottschalk G."/>
            <person name="Fritz H.-J."/>
        </authorList>
    </citation>
    <scope>NUCLEOTIDE SEQUENCE [LARGE SCALE GENOMIC DNA]</scope>
    <source>
        <strain>ATCC BAA-163 / DSM 7039 / HB27</strain>
    </source>
</reference>
<dbReference type="EMBL" id="AE017221">
    <property type="protein sequence ID" value="AAS80562.1"/>
    <property type="molecule type" value="Genomic_DNA"/>
</dbReference>
<dbReference type="RefSeq" id="WP_011172667.1">
    <property type="nucleotide sequence ID" value="NC_005835.1"/>
</dbReference>
<dbReference type="PDB" id="1V8D">
    <property type="method" value="X-ray"/>
    <property type="resolution" value="2.16 A"/>
    <property type="chains" value="A/B/C=1-196"/>
</dbReference>
<dbReference type="PDBsum" id="1V8D"/>
<dbReference type="SMR" id="Q72L49"/>
<dbReference type="KEGG" id="tth:TT_C0214"/>
<dbReference type="eggNOG" id="COG4475">
    <property type="taxonomic scope" value="Bacteria"/>
</dbReference>
<dbReference type="HOGENOM" id="CLU_106658_0_0_0"/>
<dbReference type="OrthoDB" id="9803187at2"/>
<dbReference type="EvolutionaryTrace" id="Q72L49"/>
<dbReference type="Proteomes" id="UP000000592">
    <property type="component" value="Chromosome"/>
</dbReference>
<dbReference type="Gene3D" id="3.40.50.10360">
    <property type="entry name" value="Hypothetical protein TT1679"/>
    <property type="match status" value="1"/>
</dbReference>
<dbReference type="HAMAP" id="MF_00800">
    <property type="entry name" value="UPF0340"/>
    <property type="match status" value="1"/>
</dbReference>
<dbReference type="InterPro" id="IPR028345">
    <property type="entry name" value="Antibiotic_NAT-like"/>
</dbReference>
<dbReference type="InterPro" id="IPR006340">
    <property type="entry name" value="DUF436"/>
</dbReference>
<dbReference type="NCBIfam" id="TIGR01440">
    <property type="entry name" value="TIGR01440 family protein"/>
    <property type="match status" value="1"/>
</dbReference>
<dbReference type="Pfam" id="PF04260">
    <property type="entry name" value="DUF436"/>
    <property type="match status" value="1"/>
</dbReference>
<dbReference type="PIRSF" id="PIRSF007510">
    <property type="entry name" value="UCP007510"/>
    <property type="match status" value="1"/>
</dbReference>
<dbReference type="SUPFAM" id="SSF110710">
    <property type="entry name" value="TTHA0583/YokD-like"/>
    <property type="match status" value="1"/>
</dbReference>
<feature type="chain" id="PRO_0000213030" description="UPF0340 protein TT_C0214">
    <location>
        <begin position="1"/>
        <end position="196"/>
    </location>
</feature>
<feature type="helix" evidence="2">
    <location>
        <begin position="2"/>
        <end position="18"/>
    </location>
</feature>
<feature type="strand" evidence="2">
    <location>
        <begin position="26"/>
        <end position="31"/>
    </location>
</feature>
<feature type="helix" evidence="2">
    <location>
        <begin position="33"/>
        <end position="37"/>
    </location>
</feature>
<feature type="helix" evidence="2">
    <location>
        <begin position="47"/>
        <end position="62"/>
    </location>
</feature>
<feature type="turn" evidence="2">
    <location>
        <begin position="63"/>
        <end position="65"/>
    </location>
</feature>
<feature type="strand" evidence="2">
    <location>
        <begin position="67"/>
        <end position="71"/>
    </location>
</feature>
<feature type="helix" evidence="2">
    <location>
        <begin position="74"/>
        <end position="76"/>
    </location>
</feature>
<feature type="strand" evidence="2">
    <location>
        <begin position="80"/>
        <end position="83"/>
    </location>
</feature>
<feature type="helix" evidence="2">
    <location>
        <begin position="84"/>
        <end position="89"/>
    </location>
</feature>
<feature type="strand" evidence="2">
    <location>
        <begin position="94"/>
        <end position="96"/>
    </location>
</feature>
<feature type="helix" evidence="2">
    <location>
        <begin position="106"/>
        <end position="114"/>
    </location>
</feature>
<feature type="strand" evidence="2">
    <location>
        <begin position="115"/>
        <end position="122"/>
    </location>
</feature>
<feature type="strand" evidence="2">
    <location>
        <begin position="128"/>
        <end position="136"/>
    </location>
</feature>
<feature type="helix" evidence="2">
    <location>
        <begin position="140"/>
        <end position="142"/>
    </location>
</feature>
<feature type="strand" evidence="2">
    <location>
        <begin position="147"/>
        <end position="150"/>
    </location>
</feature>
<feature type="strand" evidence="2">
    <location>
        <begin position="160"/>
        <end position="167"/>
    </location>
</feature>
<feature type="helix" evidence="2">
    <location>
        <begin position="181"/>
        <end position="189"/>
    </location>
</feature>
<proteinExistence type="evidence at protein level"/>